<feature type="chain" id="PRO_1000121674" description="Large ribosomal subunit protein bL28">
    <location>
        <begin position="1"/>
        <end position="78"/>
    </location>
</feature>
<feature type="region of interest" description="Disordered" evidence="2">
    <location>
        <begin position="1"/>
        <end position="20"/>
    </location>
</feature>
<name>RL28_PSEPW</name>
<organism>
    <name type="scientific">Pseudomonas putida (strain W619)</name>
    <dbReference type="NCBI Taxonomy" id="390235"/>
    <lineage>
        <taxon>Bacteria</taxon>
        <taxon>Pseudomonadati</taxon>
        <taxon>Pseudomonadota</taxon>
        <taxon>Gammaproteobacteria</taxon>
        <taxon>Pseudomonadales</taxon>
        <taxon>Pseudomonadaceae</taxon>
        <taxon>Pseudomonas</taxon>
    </lineage>
</organism>
<protein>
    <recommendedName>
        <fullName evidence="1">Large ribosomal subunit protein bL28</fullName>
    </recommendedName>
    <alternativeName>
        <fullName evidence="3">50S ribosomal protein L28</fullName>
    </alternativeName>
</protein>
<sequence>MSRVCQVTGKGPVTGNNISHANNKTRRRFLPNLQHHRFWVESENRFVRLRVSAKGMRVIDKRGIDVVLAELRARGEKF</sequence>
<keyword id="KW-0687">Ribonucleoprotein</keyword>
<keyword id="KW-0689">Ribosomal protein</keyword>
<evidence type="ECO:0000255" key="1">
    <source>
        <dbReference type="HAMAP-Rule" id="MF_00373"/>
    </source>
</evidence>
<evidence type="ECO:0000256" key="2">
    <source>
        <dbReference type="SAM" id="MobiDB-lite"/>
    </source>
</evidence>
<evidence type="ECO:0000305" key="3"/>
<comment type="similarity">
    <text evidence="1">Belongs to the bacterial ribosomal protein bL28 family.</text>
</comment>
<accession>B1J4M3</accession>
<gene>
    <name evidence="1" type="primary">rpmB</name>
    <name type="ordered locus">PputW619_0188</name>
</gene>
<dbReference type="EMBL" id="CP000949">
    <property type="protein sequence ID" value="ACA70694.1"/>
    <property type="molecule type" value="Genomic_DNA"/>
</dbReference>
<dbReference type="SMR" id="B1J4M3"/>
<dbReference type="STRING" id="390235.PputW619_0188"/>
<dbReference type="KEGG" id="ppw:PputW619_0188"/>
<dbReference type="eggNOG" id="COG0227">
    <property type="taxonomic scope" value="Bacteria"/>
</dbReference>
<dbReference type="HOGENOM" id="CLU_064548_3_1_6"/>
<dbReference type="OrthoDB" id="9805609at2"/>
<dbReference type="GO" id="GO:0022625">
    <property type="term" value="C:cytosolic large ribosomal subunit"/>
    <property type="evidence" value="ECO:0007669"/>
    <property type="project" value="TreeGrafter"/>
</dbReference>
<dbReference type="GO" id="GO:0003735">
    <property type="term" value="F:structural constituent of ribosome"/>
    <property type="evidence" value="ECO:0007669"/>
    <property type="project" value="InterPro"/>
</dbReference>
<dbReference type="GO" id="GO:0006412">
    <property type="term" value="P:translation"/>
    <property type="evidence" value="ECO:0007669"/>
    <property type="project" value="UniProtKB-UniRule"/>
</dbReference>
<dbReference type="FunFam" id="2.30.170.40:FF:000001">
    <property type="entry name" value="50S ribosomal protein L28"/>
    <property type="match status" value="1"/>
</dbReference>
<dbReference type="Gene3D" id="2.30.170.40">
    <property type="entry name" value="Ribosomal protein L28/L24"/>
    <property type="match status" value="1"/>
</dbReference>
<dbReference type="HAMAP" id="MF_00373">
    <property type="entry name" value="Ribosomal_bL28"/>
    <property type="match status" value="1"/>
</dbReference>
<dbReference type="InterPro" id="IPR026569">
    <property type="entry name" value="Ribosomal_bL28"/>
</dbReference>
<dbReference type="InterPro" id="IPR034704">
    <property type="entry name" value="Ribosomal_bL28/bL31-like_sf"/>
</dbReference>
<dbReference type="InterPro" id="IPR001383">
    <property type="entry name" value="Ribosomal_bL28_bact-type"/>
</dbReference>
<dbReference type="InterPro" id="IPR037147">
    <property type="entry name" value="Ribosomal_bL28_sf"/>
</dbReference>
<dbReference type="NCBIfam" id="TIGR00009">
    <property type="entry name" value="L28"/>
    <property type="match status" value="1"/>
</dbReference>
<dbReference type="PANTHER" id="PTHR13528">
    <property type="entry name" value="39S RIBOSOMAL PROTEIN L28, MITOCHONDRIAL"/>
    <property type="match status" value="1"/>
</dbReference>
<dbReference type="PANTHER" id="PTHR13528:SF2">
    <property type="entry name" value="LARGE RIBOSOMAL SUBUNIT PROTEIN BL28M"/>
    <property type="match status" value="1"/>
</dbReference>
<dbReference type="Pfam" id="PF00830">
    <property type="entry name" value="Ribosomal_L28"/>
    <property type="match status" value="1"/>
</dbReference>
<dbReference type="SUPFAM" id="SSF143800">
    <property type="entry name" value="L28p-like"/>
    <property type="match status" value="1"/>
</dbReference>
<reference key="1">
    <citation type="submission" date="2008-02" db="EMBL/GenBank/DDBJ databases">
        <title>Complete sequence of Pseudomonas putida W619.</title>
        <authorList>
            <person name="Copeland A."/>
            <person name="Lucas S."/>
            <person name="Lapidus A."/>
            <person name="Barry K."/>
            <person name="Detter J.C."/>
            <person name="Glavina del Rio T."/>
            <person name="Dalin E."/>
            <person name="Tice H."/>
            <person name="Pitluck S."/>
            <person name="Chain P."/>
            <person name="Malfatti S."/>
            <person name="Shin M."/>
            <person name="Vergez L."/>
            <person name="Schmutz J."/>
            <person name="Larimer F."/>
            <person name="Land M."/>
            <person name="Hauser L."/>
            <person name="Kyrpides N."/>
            <person name="Kim E."/>
            <person name="Taghavi S."/>
            <person name="Vangronsveld D."/>
            <person name="van der Lelie D."/>
            <person name="Richardson P."/>
        </authorList>
    </citation>
    <scope>NUCLEOTIDE SEQUENCE [LARGE SCALE GENOMIC DNA]</scope>
    <source>
        <strain>W619</strain>
    </source>
</reference>
<proteinExistence type="inferred from homology"/>